<sequence length="363" mass="39223">MSTSTIRVAIAGVGNCATSLIQGVEYYRNADPSETVPGLMHVKFGDYHVGDIEFVAAFDVDAEKVGIDLADATEASQNCTIKIADVPQTGINVLRGPTLDGLGDHYRATIDESTAEPVDVVQALIDAKADVLVSYLPVGSEEADKFYAQAAIDAGCAFVNALPVFIASDPEWAKKFTDAGIPIVGDDIKSQIGATITHRVLARLFEERGVRVDRTMQLNVGGNMDFKNMLDRNRLESKKVSKTQAVTSNIPDGPLSGKVEDRNVHIGPSDHVQWLDDRKWAYVRLEGTAFGGVPLNLEYKLEVWDSPNSAGIIIDAVRAAKIALDRGIGGPIMPASSYLMKSPPEQLPDDVARERLEAFIIEA</sequence>
<reference evidence="6" key="1">
    <citation type="journal article" date="2003" name="Appl. Microbiol. Biotechnol.">
        <title>The Corynebacterium glutamicum genome: features and impacts on biotechnological processes.</title>
        <authorList>
            <person name="Ikeda M."/>
            <person name="Nakagawa S."/>
        </authorList>
    </citation>
    <scope>NUCLEOTIDE SEQUENCE [LARGE SCALE GENOMIC DNA]</scope>
    <source>
        <strain evidence="6">ATCC 13032 / DSM 20300 / JCM 1318 / BCRC 11384 / CCUG 27702 / LMG 3730 / NBRC 12168 / NCIMB 10025 / NRRL B-2784 / 534</strain>
    </source>
</reference>
<reference evidence="4" key="2">
    <citation type="journal article" date="2019" name="MicrobiologyOpen">
        <title>Myo-inositol-1-phosphate synthase (Ino-1) functions as a protection mechanism in Corynebacterium glutamicum under oxidative stress.</title>
        <authorList>
            <person name="Chen C."/>
            <person name="Chen K."/>
            <person name="Su T."/>
            <person name="Zhang B."/>
            <person name="Li G."/>
            <person name="Pan J."/>
            <person name="Si M."/>
        </authorList>
    </citation>
    <scope>FUNCTION</scope>
    <scope>CATALYTIC ACTIVITY</scope>
    <scope>COFACTOR</scope>
    <scope>BIOPHYSICOCHEMICAL PROPERTIES</scope>
    <scope>SUBUNIT</scope>
    <scope>IDENTIFICATION BY MASS SPECTROMETRY</scope>
    <scope>DISRUPTION PHENOTYPE</scope>
</reference>
<evidence type="ECO:0000250" key="1">
    <source>
        <dbReference type="UniProtKB" id="Q8A7J8"/>
    </source>
</evidence>
<evidence type="ECO:0000269" key="2">
    <source>
    </source>
</evidence>
<evidence type="ECO:0000303" key="3">
    <source>
    </source>
</evidence>
<evidence type="ECO:0000305" key="4"/>
<evidence type="ECO:0000312" key="5">
    <source>
        <dbReference type="EMBL" id="BAC00390.1"/>
    </source>
</evidence>
<evidence type="ECO:0000312" key="6">
    <source>
        <dbReference type="Proteomes" id="UP000000582"/>
    </source>
</evidence>
<accession>Q8NLE6</accession>
<accession>Q6M1L3</accession>
<feature type="chain" id="PRO_0000456776" description="Inositol-3-phosphate synthase">
    <location>
        <begin position="1"/>
        <end position="363"/>
    </location>
</feature>
<feature type="binding site" evidence="1">
    <location>
        <position position="68"/>
    </location>
    <ligand>
        <name>NAD(+)</name>
        <dbReference type="ChEBI" id="CHEBI:57540"/>
    </ligand>
</feature>
<feature type="binding site" evidence="1">
    <location>
        <position position="127"/>
    </location>
    <ligand>
        <name>NAD(+)</name>
        <dbReference type="ChEBI" id="CHEBI:57540"/>
    </ligand>
</feature>
<feature type="binding site" evidence="1">
    <location>
        <position position="147"/>
    </location>
    <ligand>
        <name>NAD(+)</name>
        <dbReference type="ChEBI" id="CHEBI:57540"/>
    </ligand>
</feature>
<feature type="binding site" evidence="1">
    <location>
        <position position="190"/>
    </location>
    <ligand>
        <name>NAD(+)</name>
        <dbReference type="ChEBI" id="CHEBI:57540"/>
    </ligand>
</feature>
<feature type="binding site" evidence="1">
    <location>
        <position position="225"/>
    </location>
    <ligand>
        <name>NAD(+)</name>
        <dbReference type="ChEBI" id="CHEBI:57540"/>
    </ligand>
</feature>
<feature type="binding site" evidence="1">
    <location>
        <position position="238"/>
    </location>
    <ligand>
        <name>NAD(+)</name>
        <dbReference type="ChEBI" id="CHEBI:57540"/>
    </ligand>
</feature>
<protein>
    <recommendedName>
        <fullName evidence="4">Inositol-3-phosphate synthase</fullName>
        <shortName evidence="4">MIP synthase</shortName>
        <ecNumber evidence="2">5.5.1.4</ecNumber>
    </recommendedName>
    <alternativeName>
        <fullName evidence="3">Myo-inositol 1-phosphate synthase</fullName>
        <shortName evidence="4">IPS</shortName>
        <shortName evidence="4">MI-1-P synthase</shortName>
    </alternativeName>
</protein>
<dbReference type="EC" id="5.5.1.4" evidence="2"/>
<dbReference type="EMBL" id="BA000036">
    <property type="protein sequence ID" value="BAC00390.1"/>
    <property type="molecule type" value="Genomic_DNA"/>
</dbReference>
<dbReference type="RefSeq" id="NP_602192.1">
    <property type="nucleotide sequence ID" value="NC_003450.3"/>
</dbReference>
<dbReference type="RefSeq" id="WP_003855107.1">
    <property type="nucleotide sequence ID" value="NC_006958.1"/>
</dbReference>
<dbReference type="SMR" id="Q8NLE6"/>
<dbReference type="STRING" id="196627.cg3323"/>
<dbReference type="KEGG" id="cgb:cg3323"/>
<dbReference type="KEGG" id="cgl:Cgl2996"/>
<dbReference type="PATRIC" id="fig|196627.13.peg.2931"/>
<dbReference type="eggNOG" id="COG1260">
    <property type="taxonomic scope" value="Bacteria"/>
</dbReference>
<dbReference type="HOGENOM" id="CLU_050011_0_0_11"/>
<dbReference type="OrthoDB" id="9766811at2"/>
<dbReference type="BioCyc" id="CORYNE:G18NG-12617-MONOMER"/>
<dbReference type="UniPathway" id="UPA00823">
    <property type="reaction ID" value="UER00787"/>
</dbReference>
<dbReference type="Proteomes" id="UP000000582">
    <property type="component" value="Chromosome"/>
</dbReference>
<dbReference type="GO" id="GO:0004512">
    <property type="term" value="F:inositol-3-phosphate synthase activity"/>
    <property type="evidence" value="ECO:0000314"/>
    <property type="project" value="UniProtKB"/>
</dbReference>
<dbReference type="GO" id="GO:0070403">
    <property type="term" value="F:NAD+ binding"/>
    <property type="evidence" value="ECO:0000314"/>
    <property type="project" value="UniProtKB"/>
</dbReference>
<dbReference type="GO" id="GO:0006021">
    <property type="term" value="P:inositol biosynthetic process"/>
    <property type="evidence" value="ECO:0007669"/>
    <property type="project" value="UniProtKB-UniPathway"/>
</dbReference>
<dbReference type="GO" id="GO:0032958">
    <property type="term" value="P:inositol phosphate biosynthetic process"/>
    <property type="evidence" value="ECO:0000314"/>
    <property type="project" value="UniProtKB"/>
</dbReference>
<dbReference type="GO" id="GO:0010125">
    <property type="term" value="P:mycothiol biosynthetic process"/>
    <property type="evidence" value="ECO:0000315"/>
    <property type="project" value="UniProtKB"/>
</dbReference>
<dbReference type="GO" id="GO:0008654">
    <property type="term" value="P:phospholipid biosynthetic process"/>
    <property type="evidence" value="ECO:0007669"/>
    <property type="project" value="UniProtKB-KW"/>
</dbReference>
<dbReference type="Gene3D" id="3.30.360.10">
    <property type="entry name" value="Dihydrodipicolinate Reductase, domain 2"/>
    <property type="match status" value="1"/>
</dbReference>
<dbReference type="Gene3D" id="3.40.50.720">
    <property type="entry name" value="NAD(P)-binding Rossmann-like Domain"/>
    <property type="match status" value="1"/>
</dbReference>
<dbReference type="InterPro" id="IPR052199">
    <property type="entry name" value="MIPS"/>
</dbReference>
<dbReference type="InterPro" id="IPR002587">
    <property type="entry name" value="Myo-inos-1-P_Synthase"/>
</dbReference>
<dbReference type="InterPro" id="IPR017815">
    <property type="entry name" value="Myo-inos-1-P_Synthase_actino"/>
</dbReference>
<dbReference type="InterPro" id="IPR013021">
    <property type="entry name" value="Myo-inos-1-P_Synthase_GAPDH"/>
</dbReference>
<dbReference type="InterPro" id="IPR036291">
    <property type="entry name" value="NAD(P)-bd_dom_sf"/>
</dbReference>
<dbReference type="NCBIfam" id="TIGR03450">
    <property type="entry name" value="mycothiol_INO1"/>
    <property type="match status" value="1"/>
</dbReference>
<dbReference type="PANTHER" id="PTHR43125">
    <property type="entry name" value="INOSITOL-3-PHOSPHATE SYNTHASE"/>
    <property type="match status" value="1"/>
</dbReference>
<dbReference type="PANTHER" id="PTHR43125:SF1">
    <property type="entry name" value="INOSITOL-3-PHOSPHATE SYNTHASE"/>
    <property type="match status" value="1"/>
</dbReference>
<dbReference type="Pfam" id="PF01658">
    <property type="entry name" value="Inos-1-P_synth"/>
    <property type="match status" value="1"/>
</dbReference>
<dbReference type="PIRSF" id="PIRSF015578">
    <property type="entry name" value="Myoinos-ppht_syn"/>
    <property type="match status" value="1"/>
</dbReference>
<dbReference type="SUPFAM" id="SSF55347">
    <property type="entry name" value="Glyceraldehyde-3-phosphate dehydrogenase-like, C-terminal domain"/>
    <property type="match status" value="1"/>
</dbReference>
<dbReference type="SUPFAM" id="SSF51735">
    <property type="entry name" value="NAD(P)-binding Rossmann-fold domains"/>
    <property type="match status" value="1"/>
</dbReference>
<proteinExistence type="evidence at protein level"/>
<organism evidence="6">
    <name type="scientific">Corynebacterium glutamicum (strain ATCC 13032 / DSM 20300 / JCM 1318 / BCRC 11384 / CCUG 27702 / LMG 3730 / NBRC 12168 / NCIMB 10025 / NRRL B-2784 / 534)</name>
    <dbReference type="NCBI Taxonomy" id="196627"/>
    <lineage>
        <taxon>Bacteria</taxon>
        <taxon>Bacillati</taxon>
        <taxon>Actinomycetota</taxon>
        <taxon>Actinomycetes</taxon>
        <taxon>Mycobacteriales</taxon>
        <taxon>Corynebacteriaceae</taxon>
        <taxon>Corynebacterium</taxon>
    </lineage>
</organism>
<name>INO1_CORGL</name>
<keyword id="KW-0413">Isomerase</keyword>
<keyword id="KW-0444">Lipid biosynthesis</keyword>
<keyword id="KW-0443">Lipid metabolism</keyword>
<keyword id="KW-0520">NAD</keyword>
<keyword id="KW-0594">Phospholipid biosynthesis</keyword>
<keyword id="KW-1208">Phospholipid metabolism</keyword>
<keyword id="KW-1185">Reference proteome</keyword>
<gene>
    <name evidence="3" type="primary">ino-1</name>
    <name evidence="5" type="ordered locus">Cgl2996</name>
</gene>
<comment type="function">
    <text evidence="2">Key enzyme in myo-inositol biosynthesis pathway that catalyzes the conversion of glucose 6-phosphate to 1D-myo-inositol 3-phosphate in a NAD-dependent manner (PubMed:30270521). Plays a key role in oxidative stress resistance as its product is the precursor of the protective antioxidant mycothiol (MSH or AcCys-GlcN-Ins) (PubMed:30270521).</text>
</comment>
<comment type="catalytic activity">
    <reaction evidence="2">
        <text>D-glucose 6-phosphate = 1D-myo-inositol 3-phosphate</text>
        <dbReference type="Rhea" id="RHEA:10716"/>
        <dbReference type="ChEBI" id="CHEBI:58401"/>
        <dbReference type="ChEBI" id="CHEBI:61548"/>
        <dbReference type="EC" id="5.5.1.4"/>
    </reaction>
</comment>
<comment type="cofactor">
    <cofactor evidence="2">
        <name>NAD(+)</name>
        <dbReference type="ChEBI" id="CHEBI:57540"/>
    </cofactor>
</comment>
<comment type="biophysicochemical properties">
    <kinetics>
        <KM evidence="2">12.18 mM for D-glucose 6-phosphate (at 37 degrees Celsius and pH 7.5)</KM>
        <text evidence="2">kcat is 2.24 for D-glucose 6-phosphate (at 37 degrees Celsius and pH 7.5).</text>
    </kinetics>
</comment>
<comment type="pathway">
    <text evidence="4">Polyol metabolism; myo-inositol biosynthesis; myo-inositol from D-glucose 6-phosphate: step 1/2.</text>
</comment>
<comment type="subunit">
    <text evidence="2">Monomer.</text>
</comment>
<comment type="disruption phenotype">
    <text evidence="2">Abolishes synthesis of myo-inositol and mycothiol (MSH or AcCys-GlcN-Ins) (PubMed:30270521). Increases cellular protein carbonylation in response to reactive oxygen species (ROS) (PubMed:30270521). Sensitive to ROS-inducing agents, including cumene hydroperoxide, hydrogen peroxide, menadione, cadmium chloride, nickel sulfate, iodoacetamide, methylglyoxal, and 1-chloro-2,4-dinitrobenzene (PubMed:30270521). Sensitive to the antibiotics ciprofloxacin, streptomycin, vancomycin, neomycin, and rifamycin SV (PubMed:30270521). Leads to a mild growth defect in inositol-less media (PubMed:30270521).</text>
</comment>
<comment type="similarity">
    <text evidence="4">Belongs to the myo-inositol 1-phosphate synthase family.</text>
</comment>